<evidence type="ECO:0000250" key="1">
    <source>
        <dbReference type="UniProtKB" id="P0ACT4"/>
    </source>
</evidence>
<evidence type="ECO:0000255" key="2">
    <source>
        <dbReference type="PROSITE-ProRule" id="PRU00335"/>
    </source>
</evidence>
<evidence type="ECO:0007829" key="3">
    <source>
        <dbReference type="PDB" id="2VPR"/>
    </source>
</evidence>
<keyword id="KW-0002">3D-structure</keyword>
<keyword id="KW-0046">Antibiotic resistance</keyword>
<keyword id="KW-0238">DNA-binding</keyword>
<keyword id="KW-0460">Magnesium</keyword>
<keyword id="KW-0479">Metal-binding</keyword>
<keyword id="KW-0614">Plasmid</keyword>
<keyword id="KW-0678">Repressor</keyword>
<keyword id="KW-0804">Transcription</keyword>
<keyword id="KW-0805">Transcription regulation</keyword>
<protein>
    <recommendedName>
        <fullName>Tetracycline repressor protein class H</fullName>
    </recommendedName>
</protein>
<reference key="1">
    <citation type="journal article" date="1993" name="Antimicrob. Agents Chemother.">
        <title>A new tetracycline resistance determinant, Tet H, from Pasteurella multocida specifying active efflux of tetracycline.</title>
        <authorList>
            <person name="Hansen L.M."/>
            <person name="McMurry L.M."/>
            <person name="Levy S.B."/>
            <person name="Hirsh D.C."/>
        </authorList>
    </citation>
    <scope>NUCLEOTIDE SEQUENCE [GENOMIC DNA]</scope>
    <source>
        <strain>P2862</strain>
    </source>
</reference>
<proteinExistence type="evidence at protein level"/>
<organism>
    <name type="scientific">Pasteurella multocida</name>
    <dbReference type="NCBI Taxonomy" id="747"/>
    <lineage>
        <taxon>Bacteria</taxon>
        <taxon>Pseudomonadati</taxon>
        <taxon>Pseudomonadota</taxon>
        <taxon>Gammaproteobacteria</taxon>
        <taxon>Pasteurellales</taxon>
        <taxon>Pasteurellaceae</taxon>
        <taxon>Pasteurella</taxon>
    </lineage>
</organism>
<gene>
    <name type="primary">tetR</name>
</gene>
<feature type="chain" id="PRO_0000070619" description="Tetracycline repressor protein class H">
    <location>
        <begin position="1"/>
        <end position="207"/>
    </location>
</feature>
<feature type="domain" description="HTH tetR-type" evidence="2">
    <location>
        <begin position="3"/>
        <end position="63"/>
    </location>
</feature>
<feature type="DNA-binding region" description="H-T-H motif" evidence="2">
    <location>
        <begin position="26"/>
        <end position="45"/>
    </location>
</feature>
<feature type="binding site" evidence="1">
    <location>
        <position position="64"/>
    </location>
    <ligand>
        <name>tetracycline</name>
        <dbReference type="ChEBI" id="CHEBI:77932"/>
    </ligand>
</feature>
<feature type="binding site" evidence="1">
    <location>
        <position position="82"/>
    </location>
    <ligand>
        <name>tetracycline</name>
        <dbReference type="ChEBI" id="CHEBI:77932"/>
    </ligand>
</feature>
<feature type="binding site" evidence="1">
    <location>
        <position position="100"/>
    </location>
    <ligand>
        <name>Mg(2+)</name>
        <dbReference type="ChEBI" id="CHEBI:18420"/>
    </ligand>
</feature>
<feature type="helix" evidence="3">
    <location>
        <begin position="6"/>
        <end position="24"/>
    </location>
</feature>
<feature type="helix" evidence="3">
    <location>
        <begin position="27"/>
        <end position="34"/>
    </location>
</feature>
<feature type="helix" evidence="3">
    <location>
        <begin position="38"/>
        <end position="41"/>
    </location>
</feature>
<feature type="turn" evidence="3">
    <location>
        <begin position="42"/>
        <end position="44"/>
    </location>
</feature>
<feature type="helix" evidence="3">
    <location>
        <begin position="48"/>
        <end position="63"/>
    </location>
</feature>
<feature type="helix" evidence="3">
    <location>
        <begin position="75"/>
        <end position="92"/>
    </location>
</feature>
<feature type="helix" evidence="3">
    <location>
        <begin position="96"/>
        <end position="100"/>
    </location>
</feature>
<feature type="helix" evidence="3">
    <location>
        <begin position="107"/>
        <end position="109"/>
    </location>
</feature>
<feature type="helix" evidence="3">
    <location>
        <begin position="110"/>
        <end position="123"/>
    </location>
</feature>
<feature type="helix" evidence="3">
    <location>
        <begin position="127"/>
        <end position="153"/>
    </location>
</feature>
<feature type="helix" evidence="3">
    <location>
        <begin position="170"/>
        <end position="181"/>
    </location>
</feature>
<feature type="turn" evidence="3">
    <location>
        <begin position="182"/>
        <end position="184"/>
    </location>
</feature>
<feature type="helix" evidence="3">
    <location>
        <begin position="185"/>
        <end position="204"/>
    </location>
</feature>
<geneLocation type="plasmid">
    <name>pVM111</name>
</geneLocation>
<comment type="function">
    <text>TetR is the repressor of the tetracycline resistance element; its N-terminal region forms a helix-turn-helix structure and binds DNA. Binding of tetracycline to TetR reduces the repressor affinity for the tetracycline resistance gene (tetA) promoter operator sites.</text>
</comment>
<comment type="induction">
    <text>By the [Mg-tetracycline]+ complex.</text>
</comment>
<sequence>MAKLDKEQVIDDALILLNEVGIEGLTTRNVAQKIGVEQPTLYWHVKNKRALLDALAETILQKHHHHVLPLPNETWQDFLRNNAKSFRQALLMYRDGGKIHAGTRPSESQFETSEQQLQFLCDAGFSLSQAVYALSSIAHFTLGSVLETQEHQESQKEREKVETDTVAYPPLLTQAVAIMDSDNGDAAFLFVLDVMISGLETVLKSAK</sequence>
<dbReference type="EMBL" id="U00792">
    <property type="protein sequence ID" value="AAC43249.1"/>
    <property type="molecule type" value="Unassigned_DNA"/>
</dbReference>
<dbReference type="PDB" id="2VPR">
    <property type="method" value="X-ray"/>
    <property type="resolution" value="2.49 A"/>
    <property type="chains" value="A=1-207"/>
</dbReference>
<dbReference type="PDBsum" id="2VPR"/>
<dbReference type="SMR" id="P51561"/>
<dbReference type="EvolutionaryTrace" id="P51561"/>
<dbReference type="GO" id="GO:0003700">
    <property type="term" value="F:DNA-binding transcription factor activity"/>
    <property type="evidence" value="ECO:0007669"/>
    <property type="project" value="TreeGrafter"/>
</dbReference>
<dbReference type="GO" id="GO:0046872">
    <property type="term" value="F:metal ion binding"/>
    <property type="evidence" value="ECO:0007669"/>
    <property type="project" value="UniProtKB-KW"/>
</dbReference>
<dbReference type="GO" id="GO:0000976">
    <property type="term" value="F:transcription cis-regulatory region binding"/>
    <property type="evidence" value="ECO:0007669"/>
    <property type="project" value="TreeGrafter"/>
</dbReference>
<dbReference type="GO" id="GO:0045892">
    <property type="term" value="P:negative regulation of DNA-templated transcription"/>
    <property type="evidence" value="ECO:0007669"/>
    <property type="project" value="InterPro"/>
</dbReference>
<dbReference type="GO" id="GO:0046677">
    <property type="term" value="P:response to antibiotic"/>
    <property type="evidence" value="ECO:0007669"/>
    <property type="project" value="UniProtKB-KW"/>
</dbReference>
<dbReference type="Gene3D" id="1.10.10.60">
    <property type="entry name" value="Homeodomain-like"/>
    <property type="match status" value="1"/>
</dbReference>
<dbReference type="Gene3D" id="1.10.357.10">
    <property type="entry name" value="Tetracycline Repressor, domain 2"/>
    <property type="match status" value="1"/>
</dbReference>
<dbReference type="InterPro" id="IPR023772">
    <property type="entry name" value="DNA-bd_HTH_TetR-type_CS"/>
</dbReference>
<dbReference type="InterPro" id="IPR009057">
    <property type="entry name" value="Homeodomain-like_sf"/>
</dbReference>
<dbReference type="InterPro" id="IPR050109">
    <property type="entry name" value="HTH-type_TetR-like_transc_reg"/>
</dbReference>
<dbReference type="InterPro" id="IPR001647">
    <property type="entry name" value="HTH_TetR"/>
</dbReference>
<dbReference type="InterPro" id="IPR004111">
    <property type="entry name" value="Repressor_TetR_C"/>
</dbReference>
<dbReference type="InterPro" id="IPR003012">
    <property type="entry name" value="Tet_transcr_reg_TetR"/>
</dbReference>
<dbReference type="InterPro" id="IPR036271">
    <property type="entry name" value="Tet_transcr_reg_TetR-rel_C_sf"/>
</dbReference>
<dbReference type="NCBIfam" id="NF010319">
    <property type="entry name" value="PRK13756.1"/>
    <property type="match status" value="1"/>
</dbReference>
<dbReference type="PANTHER" id="PTHR30055">
    <property type="entry name" value="HTH-TYPE TRANSCRIPTIONAL REGULATOR RUTR"/>
    <property type="match status" value="1"/>
</dbReference>
<dbReference type="PANTHER" id="PTHR30055:SF151">
    <property type="entry name" value="TRANSCRIPTIONAL REGULATORY PROTEIN"/>
    <property type="match status" value="1"/>
</dbReference>
<dbReference type="Pfam" id="PF02909">
    <property type="entry name" value="TetR_C_1"/>
    <property type="match status" value="1"/>
</dbReference>
<dbReference type="Pfam" id="PF00440">
    <property type="entry name" value="TetR_N"/>
    <property type="match status" value="1"/>
</dbReference>
<dbReference type="PRINTS" id="PR00455">
    <property type="entry name" value="HTHTETR"/>
</dbReference>
<dbReference type="PRINTS" id="PR00400">
    <property type="entry name" value="TETREPRESSOR"/>
</dbReference>
<dbReference type="SUPFAM" id="SSF46689">
    <property type="entry name" value="Homeodomain-like"/>
    <property type="match status" value="1"/>
</dbReference>
<dbReference type="SUPFAM" id="SSF48498">
    <property type="entry name" value="Tetracyclin repressor-like, C-terminal domain"/>
    <property type="match status" value="1"/>
</dbReference>
<dbReference type="PROSITE" id="PS01081">
    <property type="entry name" value="HTH_TETR_1"/>
    <property type="match status" value="1"/>
</dbReference>
<dbReference type="PROSITE" id="PS50977">
    <property type="entry name" value="HTH_TETR_2"/>
    <property type="match status" value="1"/>
</dbReference>
<name>TETR8_PASMD</name>
<accession>P51561</accession>